<comment type="function">
    <text evidence="5">Involved in the utilization of stored sulfate under sulfur-deficient conditions.</text>
</comment>
<comment type="subcellular location">
    <subcellularLocation>
        <location evidence="1">Nucleus</location>
    </subcellularLocation>
</comment>
<comment type="induction">
    <text evidence="4 5">Induced in response to sulfur deprivation.</text>
</comment>
<comment type="disruption phenotype">
    <text evidence="5">Maintain higher tissue sulfate concentrations under sulfur-limiting conditions.</text>
</comment>
<comment type="similarity">
    <text evidence="7">Belongs to the MS5 protein family.</text>
</comment>
<comment type="sequence caution">
    <conflict type="erroneous gene model prediction">
        <sequence resource="EMBL-CDS" id="BAB09438"/>
    </conflict>
</comment>
<name>SDI1_ARATH</name>
<gene>
    <name evidence="6" type="primary">SDI1</name>
    <name evidence="8" type="ordered locus">At5g48850</name>
    <name evidence="9" type="ORF">K24G6.19</name>
</gene>
<keyword id="KW-0175">Coiled coil</keyword>
<keyword id="KW-0539">Nucleus</keyword>
<keyword id="KW-1185">Reference proteome</keyword>
<keyword id="KW-0677">Repeat</keyword>
<keyword id="KW-0802">TPR repeat</keyword>
<reference key="1">
    <citation type="journal article" date="1998" name="DNA Res.">
        <title>Structural analysis of Arabidopsis thaliana chromosome 5. VI. Sequence features of the regions of 1,367,185 bp covered by 19 physically assigned P1 and TAC clones.</title>
        <authorList>
            <person name="Kotani H."/>
            <person name="Nakamura Y."/>
            <person name="Sato S."/>
            <person name="Asamizu E."/>
            <person name="Kaneko T."/>
            <person name="Miyajima N."/>
            <person name="Tabata S."/>
        </authorList>
    </citation>
    <scope>NUCLEOTIDE SEQUENCE [LARGE SCALE GENOMIC DNA]</scope>
    <source>
        <strain>cv. Columbia</strain>
    </source>
</reference>
<reference key="2">
    <citation type="journal article" date="2017" name="Plant J.">
        <title>Araport11: a complete reannotation of the Arabidopsis thaliana reference genome.</title>
        <authorList>
            <person name="Cheng C.Y."/>
            <person name="Krishnakumar V."/>
            <person name="Chan A.P."/>
            <person name="Thibaud-Nissen F."/>
            <person name="Schobel S."/>
            <person name="Town C.D."/>
        </authorList>
    </citation>
    <scope>GENOME REANNOTATION</scope>
    <source>
        <strain>cv. Columbia</strain>
    </source>
</reference>
<reference key="3">
    <citation type="journal article" date="2002" name="Science">
        <title>Functional annotation of a full-length Arabidopsis cDNA collection.</title>
        <authorList>
            <person name="Seki M."/>
            <person name="Narusaka M."/>
            <person name="Kamiya A."/>
            <person name="Ishida J."/>
            <person name="Satou M."/>
            <person name="Sakurai T."/>
            <person name="Nakajima M."/>
            <person name="Enju A."/>
            <person name="Akiyama K."/>
            <person name="Oono Y."/>
            <person name="Muramatsu M."/>
            <person name="Hayashizaki Y."/>
            <person name="Kawai J."/>
            <person name="Carninci P."/>
            <person name="Itoh M."/>
            <person name="Ishii Y."/>
            <person name="Arakawa T."/>
            <person name="Shibata K."/>
            <person name="Shinagawa A."/>
            <person name="Shinozaki K."/>
        </authorList>
    </citation>
    <scope>NUCLEOTIDE SEQUENCE [LARGE SCALE MRNA]</scope>
    <source>
        <strain>cv. Columbia</strain>
    </source>
</reference>
<reference key="4">
    <citation type="journal article" date="2003" name="Science">
        <title>Empirical analysis of transcriptional activity in the Arabidopsis genome.</title>
        <authorList>
            <person name="Yamada K."/>
            <person name="Lim J."/>
            <person name="Dale J.M."/>
            <person name="Chen H."/>
            <person name="Shinn P."/>
            <person name="Palm C.J."/>
            <person name="Southwick A.M."/>
            <person name="Wu H.C."/>
            <person name="Kim C.J."/>
            <person name="Nguyen M."/>
            <person name="Pham P.K."/>
            <person name="Cheuk R.F."/>
            <person name="Karlin-Newmann G."/>
            <person name="Liu S.X."/>
            <person name="Lam B."/>
            <person name="Sakano H."/>
            <person name="Wu T."/>
            <person name="Yu G."/>
            <person name="Miranda M."/>
            <person name="Quach H.L."/>
            <person name="Tripp M."/>
            <person name="Chang C.H."/>
            <person name="Lee J.M."/>
            <person name="Toriumi M.J."/>
            <person name="Chan M.M."/>
            <person name="Tang C.C."/>
            <person name="Onodera C.S."/>
            <person name="Deng J.M."/>
            <person name="Akiyama K."/>
            <person name="Ansari Y."/>
            <person name="Arakawa T."/>
            <person name="Banh J."/>
            <person name="Banno F."/>
            <person name="Bowser L."/>
            <person name="Brooks S.Y."/>
            <person name="Carninci P."/>
            <person name="Chao Q."/>
            <person name="Choy N."/>
            <person name="Enju A."/>
            <person name="Goldsmith A.D."/>
            <person name="Gurjal M."/>
            <person name="Hansen N.F."/>
            <person name="Hayashizaki Y."/>
            <person name="Johnson-Hopson C."/>
            <person name="Hsuan V.W."/>
            <person name="Iida K."/>
            <person name="Karnes M."/>
            <person name="Khan S."/>
            <person name="Koesema E."/>
            <person name="Ishida J."/>
            <person name="Jiang P.X."/>
            <person name="Jones T."/>
            <person name="Kawai J."/>
            <person name="Kamiya A."/>
            <person name="Meyers C."/>
            <person name="Nakajima M."/>
            <person name="Narusaka M."/>
            <person name="Seki M."/>
            <person name="Sakurai T."/>
            <person name="Satou M."/>
            <person name="Tamse R."/>
            <person name="Vaysberg M."/>
            <person name="Wallender E.K."/>
            <person name="Wong C."/>
            <person name="Yamamura Y."/>
            <person name="Yuan S."/>
            <person name="Shinozaki K."/>
            <person name="Davis R.W."/>
            <person name="Theologis A."/>
            <person name="Ecker J.R."/>
        </authorList>
    </citation>
    <scope>NUCLEOTIDE SEQUENCE [LARGE SCALE MRNA]</scope>
    <source>
        <strain>cv. Columbia</strain>
    </source>
</reference>
<reference key="5">
    <citation type="journal article" date="2005" name="Plant J.">
        <title>Identification of a novel cis-acting element conferring sulfur deficiency response in Arabidopsis roots.</title>
        <authorList>
            <person name="Maruyama-Nakashita A."/>
            <person name="Nakamura Y."/>
            <person name="Watanabe-Takahashi A."/>
            <person name="Inoue E."/>
            <person name="Yamaya T."/>
            <person name="Takahashi H."/>
        </authorList>
    </citation>
    <scope>INDUCTION BY SULFUR DEPRIVATION</scope>
</reference>
<reference key="6">
    <citation type="journal article" date="2009" name="Plant Biotechnol. J.">
        <title>A sulphur deficiency-induced gene, sdi1, involved in the utilization of stored sulphate pools under sulphur-limiting conditions has potential as a diagnostic indicator of sulphur nutritional status.</title>
        <authorList>
            <person name="Howarth J.R."/>
            <person name="Parmar S."/>
            <person name="Barraclough P.B."/>
            <person name="Hawkesford M.J."/>
        </authorList>
    </citation>
    <scope>FUNCTION</scope>
    <scope>DISRUPTION PHENOTYPE</scope>
    <scope>INDUCTION BY SULFUR DEPRIVATION</scope>
</reference>
<protein>
    <recommendedName>
        <fullName evidence="6">Protein SULFUR DEFICIENCY-INDUCED 1</fullName>
        <shortName evidence="6">AtSDI1</shortName>
    </recommendedName>
</protein>
<feature type="chain" id="PRO_0000430656" description="Protein SULFUR DEFICIENCY-INDUCED 1">
    <location>
        <begin position="1"/>
        <end position="306"/>
    </location>
</feature>
<feature type="repeat" description="TPR 1" evidence="3">
    <location>
        <begin position="1"/>
        <end position="22"/>
    </location>
</feature>
<feature type="repeat" description="TPR 2" evidence="3">
    <location>
        <begin position="71"/>
        <end position="104"/>
    </location>
</feature>
<feature type="repeat" description="TPR 3" evidence="3">
    <location>
        <begin position="107"/>
        <end position="140"/>
    </location>
</feature>
<feature type="repeat" description="TPR 4" evidence="3">
    <location>
        <begin position="167"/>
        <end position="200"/>
    </location>
</feature>
<feature type="repeat" description="TPR 5" evidence="3">
    <location>
        <begin position="202"/>
        <end position="233"/>
    </location>
</feature>
<feature type="repeat" description="TPR 6" evidence="3">
    <location>
        <begin position="270"/>
        <end position="304"/>
    </location>
</feature>
<feature type="coiled-coil region" evidence="2">
    <location>
        <begin position="72"/>
        <end position="139"/>
    </location>
</feature>
<feature type="coiled-coil region" evidence="2">
    <location>
        <begin position="238"/>
        <end position="260"/>
    </location>
</feature>
<sequence length="306" mass="35257">MERSLKKTKNNYNNSIKSNLMKDDELFHVIHKVPCGDTPYVRAKHAQLIEKNPEMAIVWFWKAINTGDRVDSALKDMAVVMKQLDRSEEAIEAIKSFRPRCSKNSQDSLDNVLIDLYKKCGRMEEQVELLKRKLRQIYQGEAFNGKPTKTARSHGKKFQVTVQQEISRLLGNLGWAYMQQAKYLSAEAVYRKAQMVEPDANKSCNLAMCLIKQGRFEEGRLVLDDVLEYRVLGADDCRTRQRAEELLSELESSLPRMRDAEMEDVLGNILDDDFVLGLEEMTSTSFKSKRLPIFEQISSFRNTLVC</sequence>
<evidence type="ECO:0000250" key="1">
    <source>
        <dbReference type="UniProtKB" id="Q9SUC3"/>
    </source>
</evidence>
<evidence type="ECO:0000255" key="2"/>
<evidence type="ECO:0000255" key="3">
    <source>
        <dbReference type="PROSITE-ProRule" id="PRU00339"/>
    </source>
</evidence>
<evidence type="ECO:0000269" key="4">
    <source>
    </source>
</evidence>
<evidence type="ECO:0000269" key="5">
    <source>
    </source>
</evidence>
<evidence type="ECO:0000303" key="6">
    <source>
    </source>
</evidence>
<evidence type="ECO:0000305" key="7"/>
<evidence type="ECO:0000312" key="8">
    <source>
        <dbReference type="Araport" id="AT5G48850"/>
    </source>
</evidence>
<evidence type="ECO:0000312" key="9">
    <source>
        <dbReference type="EMBL" id="BAB09438.1"/>
    </source>
</evidence>
<evidence type="ECO:0000312" key="10">
    <source>
        <dbReference type="EMBL" id="BAC42669.1"/>
    </source>
</evidence>
<accession>Q8GXU5</accession>
<accession>Q9FKB2</accession>
<organism evidence="10">
    <name type="scientific">Arabidopsis thaliana</name>
    <name type="common">Mouse-ear cress</name>
    <dbReference type="NCBI Taxonomy" id="3702"/>
    <lineage>
        <taxon>Eukaryota</taxon>
        <taxon>Viridiplantae</taxon>
        <taxon>Streptophyta</taxon>
        <taxon>Embryophyta</taxon>
        <taxon>Tracheophyta</taxon>
        <taxon>Spermatophyta</taxon>
        <taxon>Magnoliopsida</taxon>
        <taxon>eudicotyledons</taxon>
        <taxon>Gunneridae</taxon>
        <taxon>Pentapetalae</taxon>
        <taxon>rosids</taxon>
        <taxon>malvids</taxon>
        <taxon>Brassicales</taxon>
        <taxon>Brassicaceae</taxon>
        <taxon>Camelineae</taxon>
        <taxon>Arabidopsis</taxon>
    </lineage>
</organism>
<dbReference type="EMBL" id="AB012242">
    <property type="protein sequence ID" value="BAB09438.1"/>
    <property type="status" value="ALT_SEQ"/>
    <property type="molecule type" value="Genomic_DNA"/>
</dbReference>
<dbReference type="EMBL" id="CP002688">
    <property type="protein sequence ID" value="AED95733.1"/>
    <property type="molecule type" value="Genomic_DNA"/>
</dbReference>
<dbReference type="EMBL" id="AK118038">
    <property type="protein sequence ID" value="BAC42669.1"/>
    <property type="molecule type" value="mRNA"/>
</dbReference>
<dbReference type="EMBL" id="BT005297">
    <property type="protein sequence ID" value="AAO63361.1"/>
    <property type="molecule type" value="mRNA"/>
</dbReference>
<dbReference type="RefSeq" id="NP_199696.2">
    <property type="nucleotide sequence ID" value="NM_124262.4"/>
</dbReference>
<dbReference type="SMR" id="Q8GXU5"/>
<dbReference type="FunCoup" id="Q8GXU5">
    <property type="interactions" value="2"/>
</dbReference>
<dbReference type="STRING" id="3702.Q8GXU5"/>
<dbReference type="PaxDb" id="3702-AT5G48850.1"/>
<dbReference type="EnsemblPlants" id="AT5G48850.1">
    <property type="protein sequence ID" value="AT5G48850.1"/>
    <property type="gene ID" value="AT5G48850"/>
</dbReference>
<dbReference type="GeneID" id="834943"/>
<dbReference type="Gramene" id="AT5G48850.1">
    <property type="protein sequence ID" value="AT5G48850.1"/>
    <property type="gene ID" value="AT5G48850"/>
</dbReference>
<dbReference type="KEGG" id="ath:AT5G48850"/>
<dbReference type="Araport" id="AT5G48850"/>
<dbReference type="TAIR" id="AT5G48850">
    <property type="gene designation" value="ATSDI1"/>
</dbReference>
<dbReference type="eggNOG" id="ENOG502QSSW">
    <property type="taxonomic scope" value="Eukaryota"/>
</dbReference>
<dbReference type="HOGENOM" id="CLU_057017_0_0_1"/>
<dbReference type="InParanoid" id="Q8GXU5"/>
<dbReference type="OMA" id="YILEDVW"/>
<dbReference type="OrthoDB" id="10258631at2759"/>
<dbReference type="PRO" id="PR:Q8GXU5"/>
<dbReference type="Proteomes" id="UP000006548">
    <property type="component" value="Chromosome 5"/>
</dbReference>
<dbReference type="ExpressionAtlas" id="Q8GXU5">
    <property type="expression patterns" value="baseline and differential"/>
</dbReference>
<dbReference type="GO" id="GO:0005634">
    <property type="term" value="C:nucleus"/>
    <property type="evidence" value="ECO:0007669"/>
    <property type="project" value="UniProtKB-SubCell"/>
</dbReference>
<dbReference type="GO" id="GO:0017053">
    <property type="term" value="C:transcription repressor complex"/>
    <property type="evidence" value="ECO:0000314"/>
    <property type="project" value="TAIR"/>
</dbReference>
<dbReference type="GO" id="GO:0010438">
    <property type="term" value="P:cellular response to sulfur starvation"/>
    <property type="evidence" value="ECO:0000270"/>
    <property type="project" value="UniProtKB"/>
</dbReference>
<dbReference type="GO" id="GO:0010439">
    <property type="term" value="P:regulation of glucosinolate biosynthetic process"/>
    <property type="evidence" value="ECO:0000316"/>
    <property type="project" value="TAIR"/>
</dbReference>
<dbReference type="GO" id="GO:0006792">
    <property type="term" value="P:regulation of sulfur utilization"/>
    <property type="evidence" value="ECO:0000315"/>
    <property type="project" value="TAIR"/>
</dbReference>
<dbReference type="Gene3D" id="1.25.40.10">
    <property type="entry name" value="Tetratricopeptide repeat domain"/>
    <property type="match status" value="1"/>
</dbReference>
<dbReference type="InterPro" id="IPR044961">
    <property type="entry name" value="MS5/SDI1"/>
</dbReference>
<dbReference type="InterPro" id="IPR011990">
    <property type="entry name" value="TPR-like_helical_dom_sf"/>
</dbReference>
<dbReference type="InterPro" id="IPR019734">
    <property type="entry name" value="TPR_rpt"/>
</dbReference>
<dbReference type="PANTHER" id="PTHR36326">
    <property type="entry name" value="PROTEIN POLLENLESS 3-LIKE 2"/>
    <property type="match status" value="1"/>
</dbReference>
<dbReference type="PANTHER" id="PTHR36326:SF14">
    <property type="entry name" value="PROTEIN SULFUR DEFICIENCY-INDUCED 1"/>
    <property type="match status" value="1"/>
</dbReference>
<dbReference type="Pfam" id="PF13181">
    <property type="entry name" value="TPR_8"/>
    <property type="match status" value="1"/>
</dbReference>
<dbReference type="SUPFAM" id="SSF48452">
    <property type="entry name" value="TPR-like"/>
    <property type="match status" value="1"/>
</dbReference>
<dbReference type="PROSITE" id="PS50005">
    <property type="entry name" value="TPR"/>
    <property type="match status" value="1"/>
</dbReference>
<dbReference type="PROSITE" id="PS50293">
    <property type="entry name" value="TPR_REGION"/>
    <property type="match status" value="1"/>
</dbReference>
<proteinExistence type="evidence at transcript level"/>